<reference key="1">
    <citation type="journal article" date="2001" name="DNA Res.">
        <title>Complete genomic sequence of the filamentous nitrogen-fixing cyanobacterium Anabaena sp. strain PCC 7120.</title>
        <authorList>
            <person name="Kaneko T."/>
            <person name="Nakamura Y."/>
            <person name="Wolk C.P."/>
            <person name="Kuritz T."/>
            <person name="Sasamoto S."/>
            <person name="Watanabe A."/>
            <person name="Iriguchi M."/>
            <person name="Ishikawa A."/>
            <person name="Kawashima K."/>
            <person name="Kimura T."/>
            <person name="Kishida Y."/>
            <person name="Kohara M."/>
            <person name="Matsumoto M."/>
            <person name="Matsuno A."/>
            <person name="Muraki A."/>
            <person name="Nakazaki N."/>
            <person name="Shimpo S."/>
            <person name="Sugimoto M."/>
            <person name="Takazawa M."/>
            <person name="Yamada M."/>
            <person name="Yasuda M."/>
            <person name="Tabata S."/>
        </authorList>
    </citation>
    <scope>NUCLEOTIDE SEQUENCE [LARGE SCALE GENOMIC DNA]</scope>
    <source>
        <strain>PCC 7120 / SAG 25.82 / UTEX 2576</strain>
    </source>
</reference>
<feature type="chain" id="PRO_0000267817" description="Large ribosomal subunit protein bL17">
    <location>
        <begin position="1"/>
        <end position="116"/>
    </location>
</feature>
<keyword id="KW-1185">Reference proteome</keyword>
<keyword id="KW-0687">Ribonucleoprotein</keyword>
<keyword id="KW-0689">Ribosomal protein</keyword>
<dbReference type="EMBL" id="BA000019">
    <property type="protein sequence ID" value="BAB75889.1"/>
    <property type="molecule type" value="Genomic_DNA"/>
</dbReference>
<dbReference type="PIR" id="AG2329">
    <property type="entry name" value="AG2329"/>
</dbReference>
<dbReference type="RefSeq" id="WP_010998329.1">
    <property type="nucleotide sequence ID" value="NZ_RSCN01000010.1"/>
</dbReference>
<dbReference type="SMR" id="Q8YPK4"/>
<dbReference type="STRING" id="103690.gene:10496239"/>
<dbReference type="GeneID" id="58723374"/>
<dbReference type="KEGG" id="ana:all4190"/>
<dbReference type="eggNOG" id="COG0203">
    <property type="taxonomic scope" value="Bacteria"/>
</dbReference>
<dbReference type="OrthoDB" id="9809073at2"/>
<dbReference type="Proteomes" id="UP000002483">
    <property type="component" value="Chromosome"/>
</dbReference>
<dbReference type="GO" id="GO:0022625">
    <property type="term" value="C:cytosolic large ribosomal subunit"/>
    <property type="evidence" value="ECO:0007669"/>
    <property type="project" value="TreeGrafter"/>
</dbReference>
<dbReference type="GO" id="GO:0003735">
    <property type="term" value="F:structural constituent of ribosome"/>
    <property type="evidence" value="ECO:0007669"/>
    <property type="project" value="InterPro"/>
</dbReference>
<dbReference type="GO" id="GO:0006412">
    <property type="term" value="P:translation"/>
    <property type="evidence" value="ECO:0007669"/>
    <property type="project" value="UniProtKB-UniRule"/>
</dbReference>
<dbReference type="FunFam" id="3.90.1030.10:FF:000001">
    <property type="entry name" value="50S ribosomal protein L17"/>
    <property type="match status" value="1"/>
</dbReference>
<dbReference type="Gene3D" id="3.90.1030.10">
    <property type="entry name" value="Ribosomal protein L17"/>
    <property type="match status" value="1"/>
</dbReference>
<dbReference type="HAMAP" id="MF_01368">
    <property type="entry name" value="Ribosomal_bL17"/>
    <property type="match status" value="1"/>
</dbReference>
<dbReference type="InterPro" id="IPR000456">
    <property type="entry name" value="Ribosomal_bL17"/>
</dbReference>
<dbReference type="InterPro" id="IPR047859">
    <property type="entry name" value="Ribosomal_bL17_CS"/>
</dbReference>
<dbReference type="InterPro" id="IPR036373">
    <property type="entry name" value="Ribosomal_bL17_sf"/>
</dbReference>
<dbReference type="NCBIfam" id="TIGR00059">
    <property type="entry name" value="L17"/>
    <property type="match status" value="1"/>
</dbReference>
<dbReference type="PANTHER" id="PTHR14413:SF16">
    <property type="entry name" value="LARGE RIBOSOMAL SUBUNIT PROTEIN BL17M"/>
    <property type="match status" value="1"/>
</dbReference>
<dbReference type="PANTHER" id="PTHR14413">
    <property type="entry name" value="RIBOSOMAL PROTEIN L17"/>
    <property type="match status" value="1"/>
</dbReference>
<dbReference type="Pfam" id="PF01196">
    <property type="entry name" value="Ribosomal_L17"/>
    <property type="match status" value="1"/>
</dbReference>
<dbReference type="SUPFAM" id="SSF64263">
    <property type="entry name" value="Prokaryotic ribosomal protein L17"/>
    <property type="match status" value="1"/>
</dbReference>
<dbReference type="PROSITE" id="PS01167">
    <property type="entry name" value="RIBOSOMAL_L17"/>
    <property type="match status" value="1"/>
</dbReference>
<comment type="subunit">
    <text evidence="1">Part of the 50S ribosomal subunit. Contacts protein L32.</text>
</comment>
<comment type="similarity">
    <text evidence="1">Belongs to the bacterial ribosomal protein bL17 family.</text>
</comment>
<name>RL17_NOSS1</name>
<organism>
    <name type="scientific">Nostoc sp. (strain PCC 7120 / SAG 25.82 / UTEX 2576)</name>
    <dbReference type="NCBI Taxonomy" id="103690"/>
    <lineage>
        <taxon>Bacteria</taxon>
        <taxon>Bacillati</taxon>
        <taxon>Cyanobacteriota</taxon>
        <taxon>Cyanophyceae</taxon>
        <taxon>Nostocales</taxon>
        <taxon>Nostocaceae</taxon>
        <taxon>Nostoc</taxon>
    </lineage>
</organism>
<proteinExistence type="inferred from homology"/>
<protein>
    <recommendedName>
        <fullName evidence="1">Large ribosomal subunit protein bL17</fullName>
    </recommendedName>
    <alternativeName>
        <fullName evidence="2">50S ribosomal protein L17</fullName>
    </alternativeName>
</protein>
<accession>Q8YPK4</accession>
<sequence>MRHRNRVKKLGKPADQRRALLRALTTELIRHGRITTTLVRAKVVRSEVDKIITLAKDGSLAARRRALGYIYDKQLVHALFEQVSSRYGNRQGGYTRILHTVPRRGDNAEMAIIELV</sequence>
<gene>
    <name evidence="1" type="primary">rplQ</name>
    <name evidence="1" type="synonym">rpl17</name>
    <name type="ordered locus">all4190</name>
</gene>
<evidence type="ECO:0000255" key="1">
    <source>
        <dbReference type="HAMAP-Rule" id="MF_01368"/>
    </source>
</evidence>
<evidence type="ECO:0000305" key="2"/>